<sequence>MSKIIGIDLGTTNSAVAVLEGTESKIIANPEGNRTTPSVVSFKNGEIIVGDAAKRQAVTNPDTVISIKSKMGTSEKVSANGKEYTPQEISAMILQYLKGYAEDYLGEKVTKAVITVPAYFNDAQRQATKDAGKIAGLEVERIVNEPTAAALAYGLDKTDKEEKILVFDLGGGTFDVSILELGDGVFDVLSTAGDNKLGGDDFDQKIIDHLVAEFKKENGIDLSTDKMAMQRLKDAAEKAKKDLSGVTSTQISLPFITAGEAGPLHLEMTLTRAKFDDLTRDLVERTKVPVRQALSDAGLSLSEIDEVILVGGSTRIPAVVEAVKAETGKEPNKSVNPDEVVAMGAAIQGGVITGDVKDVVLLDVTPLSLGIETMGGVFTKLIDRNTTIPTSKSQVFSTAADNQPAVDIHVLQGERPMAADNKTLGRFQLTDIPAAPRGIPQIEVTFDIDKNGIVSVKAKDLGTQKEQTIVIQSNSGLTDEEIDRMMKDAEANAEADKKRKEEVDLRNEVDQAIFATEKTIKETEGKGFDAERDAAQAALDDLKKAQENNNLDDMKAKLEALNEKAQGLAVKLYEQAAAAQQAQEGAEGAQATGNAGDDVVDGEFTEK</sequence>
<evidence type="ECO:0000255" key="1">
    <source>
        <dbReference type="HAMAP-Rule" id="MF_00332"/>
    </source>
</evidence>
<evidence type="ECO:0000256" key="2">
    <source>
        <dbReference type="SAM" id="MobiDB-lite"/>
    </source>
</evidence>
<reference key="1">
    <citation type="journal article" date="2009" name="BMC Genomics">
        <title>Genome evolution driven by host adaptations results in a more virulent and antimicrobial-resistant Streptococcus pneumoniae serotype 14.</title>
        <authorList>
            <person name="Ding F."/>
            <person name="Tang P."/>
            <person name="Hsu M.-H."/>
            <person name="Cui P."/>
            <person name="Hu S."/>
            <person name="Yu J."/>
            <person name="Chiu C.-H."/>
        </authorList>
    </citation>
    <scope>NUCLEOTIDE SEQUENCE [LARGE SCALE GENOMIC DNA]</scope>
    <source>
        <strain>CGSP14</strain>
    </source>
</reference>
<protein>
    <recommendedName>
        <fullName evidence="1">Chaperone protein DnaK</fullName>
    </recommendedName>
    <alternativeName>
        <fullName evidence="1">HSP70</fullName>
    </alternativeName>
    <alternativeName>
        <fullName evidence="1">Heat shock 70 kDa protein</fullName>
    </alternativeName>
    <alternativeName>
        <fullName evidence="1">Heat shock protein 70</fullName>
    </alternativeName>
</protein>
<feature type="chain" id="PRO_1000119764" description="Chaperone protein DnaK">
    <location>
        <begin position="1"/>
        <end position="607"/>
    </location>
</feature>
<feature type="region of interest" description="Disordered" evidence="2">
    <location>
        <begin position="580"/>
        <end position="607"/>
    </location>
</feature>
<feature type="compositionally biased region" description="Low complexity" evidence="2">
    <location>
        <begin position="580"/>
        <end position="591"/>
    </location>
</feature>
<feature type="compositionally biased region" description="Acidic residues" evidence="2">
    <location>
        <begin position="598"/>
        <end position="607"/>
    </location>
</feature>
<feature type="modified residue" description="Phosphothreonine; by autocatalysis" evidence="1">
    <location>
        <position position="173"/>
    </location>
</feature>
<keyword id="KW-0067">ATP-binding</keyword>
<keyword id="KW-0143">Chaperone</keyword>
<keyword id="KW-0547">Nucleotide-binding</keyword>
<keyword id="KW-0597">Phosphoprotein</keyword>
<keyword id="KW-0346">Stress response</keyword>
<dbReference type="EMBL" id="CP001033">
    <property type="protein sequence ID" value="ACB89742.1"/>
    <property type="molecule type" value="Genomic_DNA"/>
</dbReference>
<dbReference type="RefSeq" id="WP_000034668.1">
    <property type="nucleotide sequence ID" value="NC_010582.1"/>
</dbReference>
<dbReference type="SMR" id="B2IMB5"/>
<dbReference type="KEGG" id="spw:SPCG_0490"/>
<dbReference type="HOGENOM" id="CLU_005965_2_4_9"/>
<dbReference type="GO" id="GO:0005524">
    <property type="term" value="F:ATP binding"/>
    <property type="evidence" value="ECO:0007669"/>
    <property type="project" value="UniProtKB-UniRule"/>
</dbReference>
<dbReference type="GO" id="GO:0140662">
    <property type="term" value="F:ATP-dependent protein folding chaperone"/>
    <property type="evidence" value="ECO:0007669"/>
    <property type="project" value="InterPro"/>
</dbReference>
<dbReference type="GO" id="GO:0051082">
    <property type="term" value="F:unfolded protein binding"/>
    <property type="evidence" value="ECO:0007669"/>
    <property type="project" value="InterPro"/>
</dbReference>
<dbReference type="CDD" id="cd10234">
    <property type="entry name" value="ASKHA_NBD_HSP70_DnaK-like"/>
    <property type="match status" value="1"/>
</dbReference>
<dbReference type="FunFam" id="2.60.34.10:FF:000014">
    <property type="entry name" value="Chaperone protein DnaK HSP70"/>
    <property type="match status" value="1"/>
</dbReference>
<dbReference type="FunFam" id="1.20.1270.10:FF:000004">
    <property type="entry name" value="Molecular chaperone DnaK"/>
    <property type="match status" value="1"/>
</dbReference>
<dbReference type="FunFam" id="3.30.420.40:FF:000071">
    <property type="entry name" value="Molecular chaperone DnaK"/>
    <property type="match status" value="1"/>
</dbReference>
<dbReference type="FunFam" id="3.90.640.10:FF:000003">
    <property type="entry name" value="Molecular chaperone DnaK"/>
    <property type="match status" value="1"/>
</dbReference>
<dbReference type="Gene3D" id="1.20.1270.10">
    <property type="match status" value="1"/>
</dbReference>
<dbReference type="Gene3D" id="3.30.420.40">
    <property type="match status" value="2"/>
</dbReference>
<dbReference type="Gene3D" id="3.90.640.10">
    <property type="entry name" value="Actin, Chain A, domain 4"/>
    <property type="match status" value="1"/>
</dbReference>
<dbReference type="Gene3D" id="2.60.34.10">
    <property type="entry name" value="Substrate Binding Domain Of DNAk, Chain A, domain 1"/>
    <property type="match status" value="1"/>
</dbReference>
<dbReference type="HAMAP" id="MF_00332">
    <property type="entry name" value="DnaK"/>
    <property type="match status" value="1"/>
</dbReference>
<dbReference type="InterPro" id="IPR043129">
    <property type="entry name" value="ATPase_NBD"/>
</dbReference>
<dbReference type="InterPro" id="IPR012725">
    <property type="entry name" value="Chaperone_DnaK"/>
</dbReference>
<dbReference type="InterPro" id="IPR018181">
    <property type="entry name" value="Heat_shock_70_CS"/>
</dbReference>
<dbReference type="InterPro" id="IPR029048">
    <property type="entry name" value="HSP70_C_sf"/>
</dbReference>
<dbReference type="InterPro" id="IPR029047">
    <property type="entry name" value="HSP70_peptide-bd_sf"/>
</dbReference>
<dbReference type="InterPro" id="IPR013126">
    <property type="entry name" value="Hsp_70_fam"/>
</dbReference>
<dbReference type="NCBIfam" id="NF001413">
    <property type="entry name" value="PRK00290.1"/>
    <property type="match status" value="1"/>
</dbReference>
<dbReference type="NCBIfam" id="TIGR02350">
    <property type="entry name" value="prok_dnaK"/>
    <property type="match status" value="1"/>
</dbReference>
<dbReference type="PANTHER" id="PTHR19375">
    <property type="entry name" value="HEAT SHOCK PROTEIN 70KDA"/>
    <property type="match status" value="1"/>
</dbReference>
<dbReference type="Pfam" id="PF00012">
    <property type="entry name" value="HSP70"/>
    <property type="match status" value="1"/>
</dbReference>
<dbReference type="PRINTS" id="PR00301">
    <property type="entry name" value="HEATSHOCK70"/>
</dbReference>
<dbReference type="SUPFAM" id="SSF53067">
    <property type="entry name" value="Actin-like ATPase domain"/>
    <property type="match status" value="2"/>
</dbReference>
<dbReference type="SUPFAM" id="SSF100934">
    <property type="entry name" value="Heat shock protein 70kD (HSP70), C-terminal subdomain"/>
    <property type="match status" value="1"/>
</dbReference>
<dbReference type="SUPFAM" id="SSF100920">
    <property type="entry name" value="Heat shock protein 70kD (HSP70), peptide-binding domain"/>
    <property type="match status" value="1"/>
</dbReference>
<dbReference type="PROSITE" id="PS00297">
    <property type="entry name" value="HSP70_1"/>
    <property type="match status" value="1"/>
</dbReference>
<dbReference type="PROSITE" id="PS00329">
    <property type="entry name" value="HSP70_2"/>
    <property type="match status" value="1"/>
</dbReference>
<dbReference type="PROSITE" id="PS01036">
    <property type="entry name" value="HSP70_3"/>
    <property type="match status" value="1"/>
</dbReference>
<accession>B2IMB5</accession>
<gene>
    <name evidence="1" type="primary">dnaK</name>
    <name type="ordered locus">SPCG_0490</name>
</gene>
<organism>
    <name type="scientific">Streptococcus pneumoniae (strain CGSP14)</name>
    <dbReference type="NCBI Taxonomy" id="516950"/>
    <lineage>
        <taxon>Bacteria</taxon>
        <taxon>Bacillati</taxon>
        <taxon>Bacillota</taxon>
        <taxon>Bacilli</taxon>
        <taxon>Lactobacillales</taxon>
        <taxon>Streptococcaceae</taxon>
        <taxon>Streptococcus</taxon>
    </lineage>
</organism>
<comment type="function">
    <text evidence="1">Acts as a chaperone.</text>
</comment>
<comment type="induction">
    <text evidence="1">By stress conditions e.g. heat shock.</text>
</comment>
<comment type="similarity">
    <text evidence="1">Belongs to the heat shock protein 70 family.</text>
</comment>
<name>DNAK_STRPS</name>
<proteinExistence type="inferred from homology"/>